<proteinExistence type="inferred from homology"/>
<feature type="chain" id="PRO_1000085628" description="Uracil phosphoribosyltransferase">
    <location>
        <begin position="1"/>
        <end position="208"/>
    </location>
</feature>
<feature type="binding site" evidence="1">
    <location>
        <position position="78"/>
    </location>
    <ligand>
        <name>5-phospho-alpha-D-ribose 1-diphosphate</name>
        <dbReference type="ChEBI" id="CHEBI:58017"/>
    </ligand>
</feature>
<feature type="binding site" evidence="1">
    <location>
        <position position="103"/>
    </location>
    <ligand>
        <name>5-phospho-alpha-D-ribose 1-diphosphate</name>
        <dbReference type="ChEBI" id="CHEBI:58017"/>
    </ligand>
</feature>
<feature type="binding site" evidence="1">
    <location>
        <begin position="130"/>
        <end position="138"/>
    </location>
    <ligand>
        <name>5-phospho-alpha-D-ribose 1-diphosphate</name>
        <dbReference type="ChEBI" id="CHEBI:58017"/>
    </ligand>
</feature>
<feature type="binding site" evidence="1">
    <location>
        <position position="193"/>
    </location>
    <ligand>
        <name>uracil</name>
        <dbReference type="ChEBI" id="CHEBI:17568"/>
    </ligand>
</feature>
<feature type="binding site" evidence="1">
    <location>
        <begin position="198"/>
        <end position="200"/>
    </location>
    <ligand>
        <name>uracil</name>
        <dbReference type="ChEBI" id="CHEBI:17568"/>
    </ligand>
</feature>
<feature type="binding site" evidence="1">
    <location>
        <position position="199"/>
    </location>
    <ligand>
        <name>5-phospho-alpha-D-ribose 1-diphosphate</name>
        <dbReference type="ChEBI" id="CHEBI:58017"/>
    </ligand>
</feature>
<evidence type="ECO:0000255" key="1">
    <source>
        <dbReference type="HAMAP-Rule" id="MF_01218"/>
    </source>
</evidence>
<gene>
    <name evidence="1" type="primary">upp</name>
    <name type="ordered locus">HSM_0281</name>
</gene>
<comment type="function">
    <text evidence="1">Catalyzes the conversion of uracil and 5-phospho-alpha-D-ribose 1-diphosphate (PRPP) to UMP and diphosphate.</text>
</comment>
<comment type="catalytic activity">
    <reaction evidence="1">
        <text>UMP + diphosphate = 5-phospho-alpha-D-ribose 1-diphosphate + uracil</text>
        <dbReference type="Rhea" id="RHEA:13017"/>
        <dbReference type="ChEBI" id="CHEBI:17568"/>
        <dbReference type="ChEBI" id="CHEBI:33019"/>
        <dbReference type="ChEBI" id="CHEBI:57865"/>
        <dbReference type="ChEBI" id="CHEBI:58017"/>
        <dbReference type="EC" id="2.4.2.9"/>
    </reaction>
</comment>
<comment type="cofactor">
    <cofactor evidence="1">
        <name>Mg(2+)</name>
        <dbReference type="ChEBI" id="CHEBI:18420"/>
    </cofactor>
    <text evidence="1">Binds 1 Mg(2+) ion per subunit. The magnesium is bound as Mg-PRPP.</text>
</comment>
<comment type="activity regulation">
    <text evidence="1">Allosterically activated by GTP.</text>
</comment>
<comment type="pathway">
    <text evidence="1">Pyrimidine metabolism; UMP biosynthesis via salvage pathway; UMP from uracil: step 1/1.</text>
</comment>
<comment type="similarity">
    <text evidence="1">Belongs to the UPRTase family.</text>
</comment>
<accession>B0UW86</accession>
<organism>
    <name type="scientific">Histophilus somni (strain 2336)</name>
    <name type="common">Haemophilus somnus</name>
    <dbReference type="NCBI Taxonomy" id="228400"/>
    <lineage>
        <taxon>Bacteria</taxon>
        <taxon>Pseudomonadati</taxon>
        <taxon>Pseudomonadota</taxon>
        <taxon>Gammaproteobacteria</taxon>
        <taxon>Pasteurellales</taxon>
        <taxon>Pasteurellaceae</taxon>
        <taxon>Histophilus</taxon>
    </lineage>
</organism>
<dbReference type="EC" id="2.4.2.9" evidence="1"/>
<dbReference type="EMBL" id="CP000947">
    <property type="protein sequence ID" value="ACA31911.1"/>
    <property type="molecule type" value="Genomic_DNA"/>
</dbReference>
<dbReference type="RefSeq" id="WP_011609495.1">
    <property type="nucleotide sequence ID" value="NC_010519.1"/>
</dbReference>
<dbReference type="SMR" id="B0UW86"/>
<dbReference type="STRING" id="228400.HSM_0281"/>
<dbReference type="GeneID" id="31486563"/>
<dbReference type="KEGG" id="hsm:HSM_0281"/>
<dbReference type="HOGENOM" id="CLU_067096_2_2_6"/>
<dbReference type="UniPathway" id="UPA00574">
    <property type="reaction ID" value="UER00636"/>
</dbReference>
<dbReference type="GO" id="GO:0005525">
    <property type="term" value="F:GTP binding"/>
    <property type="evidence" value="ECO:0007669"/>
    <property type="project" value="UniProtKB-KW"/>
</dbReference>
<dbReference type="GO" id="GO:0000287">
    <property type="term" value="F:magnesium ion binding"/>
    <property type="evidence" value="ECO:0007669"/>
    <property type="project" value="UniProtKB-UniRule"/>
</dbReference>
<dbReference type="GO" id="GO:0004845">
    <property type="term" value="F:uracil phosphoribosyltransferase activity"/>
    <property type="evidence" value="ECO:0007669"/>
    <property type="project" value="UniProtKB-UniRule"/>
</dbReference>
<dbReference type="GO" id="GO:0044206">
    <property type="term" value="P:UMP salvage"/>
    <property type="evidence" value="ECO:0007669"/>
    <property type="project" value="UniProtKB-UniRule"/>
</dbReference>
<dbReference type="GO" id="GO:0006223">
    <property type="term" value="P:uracil salvage"/>
    <property type="evidence" value="ECO:0007669"/>
    <property type="project" value="InterPro"/>
</dbReference>
<dbReference type="CDD" id="cd06223">
    <property type="entry name" value="PRTases_typeI"/>
    <property type="match status" value="1"/>
</dbReference>
<dbReference type="FunFam" id="3.40.50.2020:FF:000003">
    <property type="entry name" value="Uracil phosphoribosyltransferase"/>
    <property type="match status" value="1"/>
</dbReference>
<dbReference type="Gene3D" id="3.40.50.2020">
    <property type="match status" value="1"/>
</dbReference>
<dbReference type="HAMAP" id="MF_01218_B">
    <property type="entry name" value="Upp_B"/>
    <property type="match status" value="1"/>
</dbReference>
<dbReference type="InterPro" id="IPR000836">
    <property type="entry name" value="PRibTrfase_dom"/>
</dbReference>
<dbReference type="InterPro" id="IPR029057">
    <property type="entry name" value="PRTase-like"/>
</dbReference>
<dbReference type="InterPro" id="IPR034332">
    <property type="entry name" value="Upp_B"/>
</dbReference>
<dbReference type="InterPro" id="IPR050054">
    <property type="entry name" value="UPRTase/APRTase"/>
</dbReference>
<dbReference type="InterPro" id="IPR005765">
    <property type="entry name" value="Ura_phspho_trans"/>
</dbReference>
<dbReference type="NCBIfam" id="NF001097">
    <property type="entry name" value="PRK00129.1"/>
    <property type="match status" value="1"/>
</dbReference>
<dbReference type="NCBIfam" id="TIGR01091">
    <property type="entry name" value="upp"/>
    <property type="match status" value="1"/>
</dbReference>
<dbReference type="PANTHER" id="PTHR32315">
    <property type="entry name" value="ADENINE PHOSPHORIBOSYLTRANSFERASE"/>
    <property type="match status" value="1"/>
</dbReference>
<dbReference type="PANTHER" id="PTHR32315:SF4">
    <property type="entry name" value="URACIL PHOSPHORIBOSYLTRANSFERASE, CHLOROPLASTIC"/>
    <property type="match status" value="1"/>
</dbReference>
<dbReference type="Pfam" id="PF14681">
    <property type="entry name" value="UPRTase"/>
    <property type="match status" value="1"/>
</dbReference>
<dbReference type="SUPFAM" id="SSF53271">
    <property type="entry name" value="PRTase-like"/>
    <property type="match status" value="1"/>
</dbReference>
<protein>
    <recommendedName>
        <fullName evidence="1">Uracil phosphoribosyltransferase</fullName>
        <ecNumber evidence="1">2.4.2.9</ecNumber>
    </recommendedName>
    <alternativeName>
        <fullName evidence="1">UMP pyrophosphorylase</fullName>
    </alternativeName>
    <alternativeName>
        <fullName evidence="1">UPRTase</fullName>
    </alternativeName>
</protein>
<keyword id="KW-0021">Allosteric enzyme</keyword>
<keyword id="KW-0328">Glycosyltransferase</keyword>
<keyword id="KW-0342">GTP-binding</keyword>
<keyword id="KW-0460">Magnesium</keyword>
<keyword id="KW-0547">Nucleotide-binding</keyword>
<keyword id="KW-0808">Transferase</keyword>
<sequence length="208" mass="22578">MKIVEVKHPLVKHKLGLMRVADITTKDFRELATEVGSLLTYEATSDLETEKVIIDGWCGAVEIDRIKGKKVTVVPILRAGLGMMDGVLEHVPSARISVVGMYRDEETLEPVPYFQKLASDLDERLAIVVDPMLATGGSMIATINLLKAKGCQHIKVLVLVAAPEGIKALEAVHPDVELYTASIDSHLNEHGYIIPGLGDAGDKIFGTK</sequence>
<name>UPP_HISS2</name>
<reference key="1">
    <citation type="submission" date="2008-02" db="EMBL/GenBank/DDBJ databases">
        <title>Complete sequence of Haemophilus somnus 2336.</title>
        <authorList>
            <consortium name="US DOE Joint Genome Institute"/>
            <person name="Siddaramappa S."/>
            <person name="Duncan A.J."/>
            <person name="Challacombe J.F."/>
            <person name="Rainey D."/>
            <person name="Gillaspy A.F."/>
            <person name="Carson M."/>
            <person name="Gipson J."/>
            <person name="Gipson M."/>
            <person name="Bruce D."/>
            <person name="Detter J.C."/>
            <person name="Han C.S."/>
            <person name="Land M."/>
            <person name="Tapia R."/>
            <person name="Thompson L.S."/>
            <person name="Orvis J."/>
            <person name="Zaitshik J."/>
            <person name="Barnes G."/>
            <person name="Brettin T.S."/>
            <person name="Dyer D.W."/>
            <person name="Inzana T.J."/>
        </authorList>
    </citation>
    <scope>NUCLEOTIDE SEQUENCE [LARGE SCALE GENOMIC DNA]</scope>
    <source>
        <strain>2336</strain>
    </source>
</reference>